<organism>
    <name type="scientific">Saccharolobus solfataricus (strain ATCC 35092 / DSM 1617 / JCM 11322 / P2)</name>
    <name type="common">Sulfolobus solfataricus</name>
    <dbReference type="NCBI Taxonomy" id="273057"/>
    <lineage>
        <taxon>Archaea</taxon>
        <taxon>Thermoproteota</taxon>
        <taxon>Thermoprotei</taxon>
        <taxon>Sulfolobales</taxon>
        <taxon>Sulfolobaceae</taxon>
        <taxon>Saccharolobus</taxon>
    </lineage>
</organism>
<feature type="chain" id="PRO_0000139314" description="Putative nickel-responsive regulator">
    <location>
        <begin position="1"/>
        <end position="133"/>
    </location>
</feature>
<feature type="binding site" evidence="1">
    <location>
        <position position="74"/>
    </location>
    <ligand>
        <name>Ni(2+)</name>
        <dbReference type="ChEBI" id="CHEBI:49786"/>
    </ligand>
</feature>
<feature type="binding site" evidence="1">
    <location>
        <position position="85"/>
    </location>
    <ligand>
        <name>Ni(2+)</name>
        <dbReference type="ChEBI" id="CHEBI:49786"/>
    </ligand>
</feature>
<feature type="binding site" evidence="1">
    <location>
        <position position="87"/>
    </location>
    <ligand>
        <name>Ni(2+)</name>
        <dbReference type="ChEBI" id="CHEBI:49786"/>
    </ligand>
</feature>
<feature type="binding site" evidence="1">
    <location>
        <position position="93"/>
    </location>
    <ligand>
        <name>Ni(2+)</name>
        <dbReference type="ChEBI" id="CHEBI:49786"/>
    </ligand>
</feature>
<evidence type="ECO:0000255" key="1">
    <source>
        <dbReference type="HAMAP-Rule" id="MF_00476"/>
    </source>
</evidence>
<sequence>MSAEKISISLPKELYRELEDFIIRKGIPDRSKIFQIALRNYLDENRDGNEIIYGIINLVYDHEEASEALTEIQHEYNDSIISTLHLHVSEKICIEAIAVKGEKRKLVELNNKLGQIRGILKARLLISFPYEKT</sequence>
<keyword id="KW-0238">DNA-binding</keyword>
<keyword id="KW-0479">Metal-binding</keyword>
<keyword id="KW-0533">Nickel</keyword>
<keyword id="KW-1185">Reference proteome</keyword>
<keyword id="KW-0804">Transcription</keyword>
<keyword id="KW-0805">Transcription regulation</keyword>
<accession>Q9UX49</accession>
<comment type="function">
    <text evidence="1">Transcriptional regulator.</text>
</comment>
<comment type="cofactor">
    <cofactor evidence="1">
        <name>Ni(2+)</name>
        <dbReference type="ChEBI" id="CHEBI:49786"/>
    </cofactor>
    <text evidence="1">Binds 1 nickel ion per subunit.</text>
</comment>
<comment type="similarity">
    <text evidence="1">Belongs to the transcriptional regulatory CopG/NikR family.</text>
</comment>
<protein>
    <recommendedName>
        <fullName evidence="1">Putative nickel-responsive regulator</fullName>
    </recommendedName>
</protein>
<gene>
    <name type="ordered locus">SSO0659</name>
    <name type="ORF">C09_008</name>
</gene>
<proteinExistence type="inferred from homology"/>
<name>NIKR_SACS2</name>
<reference key="1">
    <citation type="journal article" date="2000" name="Genome">
        <title>Gene content and organization of a 281-kbp contig from the genome of the extremely thermophilic archaeon, Sulfolobus solfataricus P2.</title>
        <authorList>
            <person name="Charlebois R.L."/>
            <person name="Singh R.K."/>
            <person name="Chan-Weiher C.C.-Y."/>
            <person name="Allard G."/>
            <person name="Chow C."/>
            <person name="Confalonieri F."/>
            <person name="Curtis B."/>
            <person name="Duguet M."/>
            <person name="Erauso G."/>
            <person name="Faguy D."/>
            <person name="Gaasterland T."/>
            <person name="Garrett R.A."/>
            <person name="Gordon P."/>
            <person name="Jeffries A.C."/>
            <person name="Kozera C."/>
            <person name="Kushwaha N."/>
            <person name="Lafleur E."/>
            <person name="Medina N."/>
            <person name="Peng X."/>
            <person name="Penny S.L."/>
            <person name="She Q."/>
            <person name="St Jean A."/>
            <person name="van der Oost J."/>
            <person name="Young F."/>
            <person name="Zivanovic Y."/>
            <person name="Doolittle W.F."/>
            <person name="Ragan M.A."/>
            <person name="Sensen C.W."/>
        </authorList>
    </citation>
    <scope>NUCLEOTIDE SEQUENCE [LARGE SCALE GENOMIC DNA]</scope>
    <source>
        <strain>ATCC 35092 / DSM 1617 / JCM 11322 / P2</strain>
    </source>
</reference>
<reference key="2">
    <citation type="journal article" date="2001" name="Proc. Natl. Acad. Sci. U.S.A.">
        <title>The complete genome of the crenarchaeon Sulfolobus solfataricus P2.</title>
        <authorList>
            <person name="She Q."/>
            <person name="Singh R.K."/>
            <person name="Confalonieri F."/>
            <person name="Zivanovic Y."/>
            <person name="Allard G."/>
            <person name="Awayez M.J."/>
            <person name="Chan-Weiher C.C.-Y."/>
            <person name="Clausen I.G."/>
            <person name="Curtis B.A."/>
            <person name="De Moors A."/>
            <person name="Erauso G."/>
            <person name="Fletcher C."/>
            <person name="Gordon P.M.K."/>
            <person name="Heikamp-de Jong I."/>
            <person name="Jeffries A.C."/>
            <person name="Kozera C.J."/>
            <person name="Medina N."/>
            <person name="Peng X."/>
            <person name="Thi-Ngoc H.P."/>
            <person name="Redder P."/>
            <person name="Schenk M.E."/>
            <person name="Theriault C."/>
            <person name="Tolstrup N."/>
            <person name="Charlebois R.L."/>
            <person name="Doolittle W.F."/>
            <person name="Duguet M."/>
            <person name="Gaasterland T."/>
            <person name="Garrett R.A."/>
            <person name="Ragan M.A."/>
            <person name="Sensen C.W."/>
            <person name="Van der Oost J."/>
        </authorList>
    </citation>
    <scope>NUCLEOTIDE SEQUENCE [LARGE SCALE GENOMIC DNA]</scope>
    <source>
        <strain>ATCC 35092 / DSM 1617 / JCM 11322 / P2</strain>
    </source>
</reference>
<dbReference type="EMBL" id="Y18930">
    <property type="protein sequence ID" value="CAB57643.1"/>
    <property type="molecule type" value="Genomic_DNA"/>
</dbReference>
<dbReference type="EMBL" id="AE006641">
    <property type="protein sequence ID" value="AAK40964.1"/>
    <property type="molecule type" value="Genomic_DNA"/>
</dbReference>
<dbReference type="PIR" id="E90213">
    <property type="entry name" value="E90213"/>
</dbReference>
<dbReference type="RefSeq" id="WP_009991200.1">
    <property type="nucleotide sequence ID" value="NC_002754.1"/>
</dbReference>
<dbReference type="SMR" id="Q9UX49"/>
<dbReference type="STRING" id="273057.SSO0659"/>
<dbReference type="PaxDb" id="273057-SSO0659"/>
<dbReference type="EnsemblBacteria" id="AAK40964">
    <property type="protein sequence ID" value="AAK40964"/>
    <property type="gene ID" value="SSO0659"/>
</dbReference>
<dbReference type="KEGG" id="sso:SSO0659"/>
<dbReference type="PATRIC" id="fig|273057.12.peg.661"/>
<dbReference type="eggNOG" id="arCOG01008">
    <property type="taxonomic scope" value="Archaea"/>
</dbReference>
<dbReference type="HOGENOM" id="CLU_113319_2_1_2"/>
<dbReference type="InParanoid" id="Q9UX49"/>
<dbReference type="PhylomeDB" id="Q9UX49"/>
<dbReference type="Proteomes" id="UP000001974">
    <property type="component" value="Chromosome"/>
</dbReference>
<dbReference type="GO" id="GO:0003677">
    <property type="term" value="F:DNA binding"/>
    <property type="evidence" value="ECO:0000318"/>
    <property type="project" value="GO_Central"/>
</dbReference>
<dbReference type="GO" id="GO:0003700">
    <property type="term" value="F:DNA-binding transcription factor activity"/>
    <property type="evidence" value="ECO:0007669"/>
    <property type="project" value="UniProtKB-UniRule"/>
</dbReference>
<dbReference type="GO" id="GO:0016151">
    <property type="term" value="F:nickel cation binding"/>
    <property type="evidence" value="ECO:0007669"/>
    <property type="project" value="UniProtKB-UniRule"/>
</dbReference>
<dbReference type="GO" id="GO:0006355">
    <property type="term" value="P:regulation of DNA-templated transcription"/>
    <property type="evidence" value="ECO:0000318"/>
    <property type="project" value="GO_Central"/>
</dbReference>
<dbReference type="GO" id="GO:0010045">
    <property type="term" value="P:response to nickel cation"/>
    <property type="evidence" value="ECO:0007669"/>
    <property type="project" value="InterPro"/>
</dbReference>
<dbReference type="CDD" id="cd22231">
    <property type="entry name" value="RHH_NikR_HicB-like"/>
    <property type="match status" value="1"/>
</dbReference>
<dbReference type="Gene3D" id="3.30.70.1150">
    <property type="entry name" value="ACT-like. Chain A, domain 2"/>
    <property type="match status" value="1"/>
</dbReference>
<dbReference type="Gene3D" id="1.10.1220.10">
    <property type="entry name" value="Met repressor-like"/>
    <property type="match status" value="1"/>
</dbReference>
<dbReference type="HAMAP" id="MF_00476">
    <property type="entry name" value="NikR"/>
    <property type="match status" value="1"/>
</dbReference>
<dbReference type="InterPro" id="IPR027271">
    <property type="entry name" value="Acetolactate_synth/TF_NikR_C"/>
</dbReference>
<dbReference type="InterPro" id="IPR045865">
    <property type="entry name" value="ACT-like_dom_sf"/>
</dbReference>
<dbReference type="InterPro" id="IPR013321">
    <property type="entry name" value="Arc_rbn_hlx_hlx"/>
</dbReference>
<dbReference type="InterPro" id="IPR002145">
    <property type="entry name" value="CopG"/>
</dbReference>
<dbReference type="InterPro" id="IPR050192">
    <property type="entry name" value="CopG/NikR_regulator"/>
</dbReference>
<dbReference type="InterPro" id="IPR022988">
    <property type="entry name" value="Ni_resp_reg_NikR"/>
</dbReference>
<dbReference type="InterPro" id="IPR010985">
    <property type="entry name" value="Ribbon_hlx_hlx"/>
</dbReference>
<dbReference type="InterPro" id="IPR014864">
    <property type="entry name" value="TF_NikR_Ni-bd_C"/>
</dbReference>
<dbReference type="PANTHER" id="PTHR34719">
    <property type="entry name" value="NICKEL-RESPONSIVE REGULATOR"/>
    <property type="match status" value="1"/>
</dbReference>
<dbReference type="PANTHER" id="PTHR34719:SF2">
    <property type="entry name" value="NICKEL-RESPONSIVE REGULATOR"/>
    <property type="match status" value="1"/>
</dbReference>
<dbReference type="Pfam" id="PF08753">
    <property type="entry name" value="NikR_C"/>
    <property type="match status" value="1"/>
</dbReference>
<dbReference type="Pfam" id="PF01402">
    <property type="entry name" value="RHH_1"/>
    <property type="match status" value="1"/>
</dbReference>
<dbReference type="SUPFAM" id="SSF55021">
    <property type="entry name" value="ACT-like"/>
    <property type="match status" value="1"/>
</dbReference>
<dbReference type="SUPFAM" id="SSF47598">
    <property type="entry name" value="Ribbon-helix-helix"/>
    <property type="match status" value="1"/>
</dbReference>